<reference key="1">
    <citation type="journal article" date="2003" name="J. Bacteriol.">
        <title>Sequence of the 165-kilobase catabolic plasmid pAO1 from Arthrobacter nicotinovorans and identification of a pAO1-dependent nicotine uptake system.</title>
        <authorList>
            <person name="Igloi G.L."/>
            <person name="Brandsch R."/>
        </authorList>
    </citation>
    <scope>NUCLEOTIDE SEQUENCE [GENOMIC DNA]</scope>
    <source>
        <strain>ATCC 49919 / DSM 420 / JCM 3874 / KCTC 9902 / LMG 16253 / NBRC 15511</strain>
        <plasmid>pAO1</plasmid>
    </source>
</reference>
<reference key="2">
    <citation type="journal article" date="2013" name="Res. Microbiol.">
        <title>Evidence of a plasmid-encoded oxidative xylose-catabolic pathway in Arthrobacter nicotinovorans pAO1.</title>
        <authorList>
            <person name="Mihasan M."/>
            <person name="Stefan M."/>
            <person name="Hritcu L."/>
            <person name="Artenie V."/>
            <person name="Brandsch R."/>
        </authorList>
    </citation>
    <scope>FUNCTION</scope>
    <scope>INDUCTION</scope>
    <scope>PATHWAY</scope>
    <source>
        <strain>ATCC 49919 / DSM 420 / JCM 3874 / KCTC 9902 / LMG 16253 / NBRC 15511</strain>
        <plasmid>pAO1</plasmid>
    </source>
</reference>
<comment type="function">
    <text evidence="3">Transcriptional regulator involved in the regulation of the entire oxidative D-xylose degradation pathway via repression of the corresponding genes.</text>
</comment>
<comment type="pathway">
    <text evidence="2">Carbohydrate metabolism; D-xylose degradation [regulation].</text>
</comment>
<comment type="induction">
    <text evidence="2">Is constitutively expressed at low levels regardless of the presence or absence of D-xylose.</text>
</comment>
<organism>
    <name type="scientific">Paenarthrobacter nicotinovorans</name>
    <name type="common">Arthrobacter nicotinovorans</name>
    <dbReference type="NCBI Taxonomy" id="29320"/>
    <lineage>
        <taxon>Bacteria</taxon>
        <taxon>Bacillati</taxon>
        <taxon>Actinomycetota</taxon>
        <taxon>Actinomycetes</taxon>
        <taxon>Micrococcales</taxon>
        <taxon>Micrococcaceae</taxon>
        <taxon>Paenarthrobacter</taxon>
    </lineage>
</organism>
<dbReference type="EMBL" id="AJ507836">
    <property type="protein sequence ID" value="CAD47890.1"/>
    <property type="molecule type" value="Genomic_DNA"/>
</dbReference>
<dbReference type="RefSeq" id="WP_016359401.1">
    <property type="nucleotide sequence ID" value="NC_021229.1"/>
</dbReference>
<dbReference type="RefSeq" id="YP_007988716.1">
    <property type="nucleotide sequence ID" value="NC_021229.1"/>
</dbReference>
<dbReference type="SMR" id="Q8GAL4"/>
<dbReference type="GeneID" id="84020239"/>
<dbReference type="UniPathway" id="UPA00810"/>
<dbReference type="GO" id="GO:0003677">
    <property type="term" value="F:DNA binding"/>
    <property type="evidence" value="ECO:0007669"/>
    <property type="project" value="UniProtKB-KW"/>
</dbReference>
<dbReference type="GO" id="GO:0003700">
    <property type="term" value="F:DNA-binding transcription factor activity"/>
    <property type="evidence" value="ECO:0000304"/>
    <property type="project" value="UniProtKB"/>
</dbReference>
<dbReference type="GO" id="GO:0042843">
    <property type="term" value="P:D-xylose catabolic process"/>
    <property type="evidence" value="ECO:0007669"/>
    <property type="project" value="UniProtKB-UniPathway"/>
</dbReference>
<dbReference type="GO" id="GO:0043469">
    <property type="term" value="P:regulation of D-xylose catabolic process"/>
    <property type="evidence" value="ECO:0000304"/>
    <property type="project" value="UniProtKB"/>
</dbReference>
<dbReference type="GO" id="GO:0006355">
    <property type="term" value="P:regulation of DNA-templated transcription"/>
    <property type="evidence" value="ECO:0000304"/>
    <property type="project" value="UniProtKB"/>
</dbReference>
<dbReference type="CDD" id="cd07377">
    <property type="entry name" value="WHTH_GntR"/>
    <property type="match status" value="1"/>
</dbReference>
<dbReference type="Gene3D" id="1.20.120.530">
    <property type="entry name" value="GntR ligand-binding domain-like"/>
    <property type="match status" value="1"/>
</dbReference>
<dbReference type="Gene3D" id="1.10.10.10">
    <property type="entry name" value="Winged helix-like DNA-binding domain superfamily/Winged helix DNA-binding domain"/>
    <property type="match status" value="1"/>
</dbReference>
<dbReference type="InterPro" id="IPR011711">
    <property type="entry name" value="GntR_C"/>
</dbReference>
<dbReference type="InterPro" id="IPR008920">
    <property type="entry name" value="TF_FadR/GntR_C"/>
</dbReference>
<dbReference type="InterPro" id="IPR000524">
    <property type="entry name" value="Tscrpt_reg_HTH_GntR"/>
</dbReference>
<dbReference type="InterPro" id="IPR036388">
    <property type="entry name" value="WH-like_DNA-bd_sf"/>
</dbReference>
<dbReference type="InterPro" id="IPR036390">
    <property type="entry name" value="WH_DNA-bd_sf"/>
</dbReference>
<dbReference type="PANTHER" id="PTHR43537:SF24">
    <property type="entry name" value="GLUCONATE OPERON TRANSCRIPTIONAL REPRESSOR"/>
    <property type="match status" value="1"/>
</dbReference>
<dbReference type="PANTHER" id="PTHR43537">
    <property type="entry name" value="TRANSCRIPTIONAL REGULATOR, GNTR FAMILY"/>
    <property type="match status" value="1"/>
</dbReference>
<dbReference type="Pfam" id="PF07729">
    <property type="entry name" value="FCD"/>
    <property type="match status" value="1"/>
</dbReference>
<dbReference type="Pfam" id="PF00392">
    <property type="entry name" value="GntR"/>
    <property type="match status" value="1"/>
</dbReference>
<dbReference type="SMART" id="SM00895">
    <property type="entry name" value="FCD"/>
    <property type="match status" value="1"/>
</dbReference>
<dbReference type="SMART" id="SM00345">
    <property type="entry name" value="HTH_GNTR"/>
    <property type="match status" value="1"/>
</dbReference>
<dbReference type="SUPFAM" id="SSF48008">
    <property type="entry name" value="GntR ligand-binding domain-like"/>
    <property type="match status" value="1"/>
</dbReference>
<dbReference type="SUPFAM" id="SSF46785">
    <property type="entry name" value="Winged helix' DNA-binding domain"/>
    <property type="match status" value="1"/>
</dbReference>
<dbReference type="PROSITE" id="PS50949">
    <property type="entry name" value="HTH_GNTR"/>
    <property type="match status" value="1"/>
</dbReference>
<accession>Q8GAL4</accession>
<protein>
    <recommendedName>
        <fullName>Probable D-xylose utilization operon transcriptional repressor</fullName>
    </recommendedName>
    <alternativeName>
        <fullName>HTH-type transcriptional regulator GntR</fullName>
    </alternativeName>
</protein>
<geneLocation type="plasmid">
    <name>pAO1</name>
</geneLocation>
<keyword id="KW-0238">DNA-binding</keyword>
<keyword id="KW-0614">Plasmid</keyword>
<keyword id="KW-0678">Repressor</keyword>
<keyword id="KW-0804">Transcription</keyword>
<keyword id="KW-0805">Transcription regulation</keyword>
<name>GNTR_PAENI</name>
<feature type="chain" id="PRO_0000429426" description="Probable D-xylose utilization operon transcriptional repressor">
    <location>
        <begin position="1"/>
        <end position="226"/>
    </location>
</feature>
<feature type="domain" description="HTH gntR-type" evidence="1">
    <location>
        <begin position="11"/>
        <end position="78"/>
    </location>
</feature>
<feature type="DNA-binding region" description="H-T-H motif" evidence="1">
    <location>
        <begin position="38"/>
        <end position="57"/>
    </location>
</feature>
<proteinExistence type="evidence at transcript level"/>
<sequence length="226" mass="24154">MDATSKRLTRTTVASQVRDFIVMEIAQGRLPLGAPVREMEIAAQLGTSQTPVREAFRELAALGLLESRIHVGTRVRQLAEKDLVEAVPIRSALEGIAGRLAANNYHKHAEEVRGSFEAMKEVAEGGDRRVFAAASTTFHRSVVRAAENASLLRAWNALGIEVMTILAMASSDIPLDDAAESHRPIVDALEAGDPELAEHALTHHVAAYLPATAHSNGGVDAAVQAS</sequence>
<evidence type="ECO:0000255" key="1">
    <source>
        <dbReference type="PROSITE-ProRule" id="PRU00307"/>
    </source>
</evidence>
<evidence type="ECO:0000269" key="2">
    <source>
    </source>
</evidence>
<evidence type="ECO:0000305" key="3">
    <source>
    </source>
</evidence>
<gene>
    <name type="primary">gntR</name>
    <name type="ORF">ORF32</name>
</gene>